<name>TBB4A_HUMAN</name>
<dbReference type="EMBL" id="X00734">
    <property type="protein sequence ID" value="CAA25318.1"/>
    <property type="molecule type" value="Genomic_DNA"/>
</dbReference>
<dbReference type="EMBL" id="AK075307">
    <property type="protein sequence ID" value="BAG52106.1"/>
    <property type="molecule type" value="mRNA"/>
</dbReference>
<dbReference type="EMBL" id="CH471139">
    <property type="protein sequence ID" value="EAW69078.1"/>
    <property type="molecule type" value="Genomic_DNA"/>
</dbReference>
<dbReference type="EMBL" id="BC006570">
    <property type="protein sequence ID" value="AAH06570.1"/>
    <property type="molecule type" value="mRNA"/>
</dbReference>
<dbReference type="EMBL" id="BC013683">
    <property type="protein sequence ID" value="AAH13683.1"/>
    <property type="molecule type" value="mRNA"/>
</dbReference>
<dbReference type="CCDS" id="CCDS12168.1"/>
<dbReference type="PIR" id="A02972">
    <property type="entry name" value="UBHU5B"/>
</dbReference>
<dbReference type="RefSeq" id="NP_001276052.1">
    <property type="nucleotide sequence ID" value="NM_001289123.1"/>
</dbReference>
<dbReference type="RefSeq" id="NP_001276056.1">
    <property type="nucleotide sequence ID" value="NM_001289127.1"/>
</dbReference>
<dbReference type="RefSeq" id="NP_001276058.1">
    <property type="nucleotide sequence ID" value="NM_001289129.2"/>
</dbReference>
<dbReference type="RefSeq" id="NP_001276059.1">
    <property type="nucleotide sequence ID" value="NM_001289130.1"/>
</dbReference>
<dbReference type="RefSeq" id="NP_001276060.1">
    <property type="nucleotide sequence ID" value="NM_001289131.1"/>
</dbReference>
<dbReference type="RefSeq" id="NP_006078.2">
    <property type="nucleotide sequence ID" value="NM_006087.3"/>
</dbReference>
<dbReference type="SMR" id="P04350"/>
<dbReference type="BioGRID" id="115655">
    <property type="interactions" value="263"/>
</dbReference>
<dbReference type="CORUM" id="P04350"/>
<dbReference type="FunCoup" id="P04350">
    <property type="interactions" value="1180"/>
</dbReference>
<dbReference type="IntAct" id="P04350">
    <property type="interactions" value="151"/>
</dbReference>
<dbReference type="MINT" id="P04350"/>
<dbReference type="STRING" id="9606.ENSP00000264071"/>
<dbReference type="ChEMBL" id="CHEMBL3838"/>
<dbReference type="DrugBank" id="DB11638">
    <property type="generic name" value="Artenimol"/>
</dbReference>
<dbReference type="DrugBank" id="DB05147">
    <property type="generic name" value="CYT997"/>
</dbReference>
<dbReference type="DrugBank" id="DB01873">
    <property type="generic name" value="Epothilone D"/>
</dbReference>
<dbReference type="DrugBank" id="DB03010">
    <property type="generic name" value="Patupilone"/>
</dbReference>
<dbReference type="DrugBank" id="DB06042">
    <property type="generic name" value="ZEN-012"/>
</dbReference>
<dbReference type="DrugCentral" id="P04350"/>
<dbReference type="GlyGen" id="P04350">
    <property type="glycosylation" value="1 site, 1 O-linked glycan (1 site)"/>
</dbReference>
<dbReference type="iPTMnet" id="P04350"/>
<dbReference type="MetOSite" id="P04350"/>
<dbReference type="PhosphoSitePlus" id="P04350"/>
<dbReference type="SwissPalm" id="P04350"/>
<dbReference type="BioMuta" id="TUBB4A"/>
<dbReference type="DMDM" id="93141323"/>
<dbReference type="OGP" id="P04350"/>
<dbReference type="REPRODUCTION-2DPAGE" id="IPI00023598"/>
<dbReference type="jPOST" id="P04350"/>
<dbReference type="MassIVE" id="P04350"/>
<dbReference type="PaxDb" id="9606-ENSP00000264071"/>
<dbReference type="PeptideAtlas" id="P04350"/>
<dbReference type="PRIDE" id="P04350"/>
<dbReference type="ProteomicsDB" id="51702"/>
<dbReference type="Pumba" id="P04350"/>
<dbReference type="TopDownProteomics" id="P04350"/>
<dbReference type="Antibodypedia" id="4387">
    <property type="antibodies" value="211 antibodies from 21 providers"/>
</dbReference>
<dbReference type="DNASU" id="10382"/>
<dbReference type="Ensembl" id="ENST00000264071.7">
    <property type="protein sequence ID" value="ENSP00000264071.1"/>
    <property type="gene ID" value="ENSG00000104833.12"/>
</dbReference>
<dbReference type="GeneID" id="10382"/>
<dbReference type="KEGG" id="hsa:10382"/>
<dbReference type="MANE-Select" id="ENST00000264071.7">
    <property type="protein sequence ID" value="ENSP00000264071.1"/>
    <property type="RefSeq nucleotide sequence ID" value="NM_006087.4"/>
    <property type="RefSeq protein sequence ID" value="NP_006078.2"/>
</dbReference>
<dbReference type="UCSC" id="uc002mfg.2">
    <property type="organism name" value="human"/>
</dbReference>
<dbReference type="AGR" id="HGNC:20774"/>
<dbReference type="CTD" id="10382"/>
<dbReference type="DisGeNET" id="10382"/>
<dbReference type="GeneCards" id="TUBB4A"/>
<dbReference type="GeneReviews" id="TUBB4A"/>
<dbReference type="HGNC" id="HGNC:20774">
    <property type="gene designation" value="TUBB4A"/>
</dbReference>
<dbReference type="HPA" id="ENSG00000104833">
    <property type="expression patterns" value="Tissue enriched (brain)"/>
</dbReference>
<dbReference type="MalaCards" id="TUBB4A"/>
<dbReference type="MIM" id="128101">
    <property type="type" value="phenotype"/>
</dbReference>
<dbReference type="MIM" id="602662">
    <property type="type" value="gene"/>
</dbReference>
<dbReference type="MIM" id="612438">
    <property type="type" value="phenotype"/>
</dbReference>
<dbReference type="neXtProt" id="NX_P04350"/>
<dbReference type="OpenTargets" id="ENSG00000104833"/>
<dbReference type="Orphanet" id="139441">
    <property type="disease" value="Hypomyelination with atrophy of basal ganglia and cerebellum"/>
</dbReference>
<dbReference type="Orphanet" id="98805">
    <property type="disease" value="Primary dystonia, DYT4 type"/>
</dbReference>
<dbReference type="PharmGKB" id="PA134949465"/>
<dbReference type="VEuPathDB" id="HostDB:ENSG00000104833"/>
<dbReference type="eggNOG" id="KOG1375">
    <property type="taxonomic scope" value="Eukaryota"/>
</dbReference>
<dbReference type="GeneTree" id="ENSGT00940000161972"/>
<dbReference type="HOGENOM" id="CLU_015718_1_1_1"/>
<dbReference type="InParanoid" id="P04350"/>
<dbReference type="OMA" id="CFPAGGN"/>
<dbReference type="OrthoDB" id="1662883at2759"/>
<dbReference type="PAN-GO" id="P04350">
    <property type="GO annotations" value="6 GO annotations based on evolutionary models"/>
</dbReference>
<dbReference type="PhylomeDB" id="P04350"/>
<dbReference type="TreeFam" id="TF300298"/>
<dbReference type="PathwayCommons" id="P04350"/>
<dbReference type="Reactome" id="R-HSA-1445148">
    <property type="pathway name" value="Translocation of SLC2A4 (GLUT4) to the plasma membrane"/>
</dbReference>
<dbReference type="Reactome" id="R-HSA-190840">
    <property type="pathway name" value="Microtubule-dependent trafficking of connexons from Golgi to the plasma membrane"/>
</dbReference>
<dbReference type="Reactome" id="R-HSA-190861">
    <property type="pathway name" value="Gap junction assembly"/>
</dbReference>
<dbReference type="Reactome" id="R-HSA-2132295">
    <property type="pathway name" value="MHC class II antigen presentation"/>
</dbReference>
<dbReference type="Reactome" id="R-HSA-2467813">
    <property type="pathway name" value="Separation of Sister Chromatids"/>
</dbReference>
<dbReference type="Reactome" id="R-HSA-2500257">
    <property type="pathway name" value="Resolution of Sister Chromatid Cohesion"/>
</dbReference>
<dbReference type="Reactome" id="R-HSA-2565942">
    <property type="pathway name" value="Regulation of PLK1 Activity at G2/M Transition"/>
</dbReference>
<dbReference type="Reactome" id="R-HSA-3371497">
    <property type="pathway name" value="HSP90 chaperone cycle for steroid hormone receptors (SHR) in the presence of ligand"/>
</dbReference>
<dbReference type="Reactome" id="R-HSA-380259">
    <property type="pathway name" value="Loss of Nlp from mitotic centrosomes"/>
</dbReference>
<dbReference type="Reactome" id="R-HSA-380270">
    <property type="pathway name" value="Recruitment of mitotic centrosome proteins and complexes"/>
</dbReference>
<dbReference type="Reactome" id="R-HSA-380284">
    <property type="pathway name" value="Loss of proteins required for interphase microtubule organization from the centrosome"/>
</dbReference>
<dbReference type="Reactome" id="R-HSA-380320">
    <property type="pathway name" value="Recruitment of NuMA to mitotic centrosomes"/>
</dbReference>
<dbReference type="Reactome" id="R-HSA-389957">
    <property type="pathway name" value="Prefoldin mediated transfer of substrate to CCT/TriC"/>
</dbReference>
<dbReference type="Reactome" id="R-HSA-389960">
    <property type="pathway name" value="Formation of tubulin folding intermediates by CCT/TriC"/>
</dbReference>
<dbReference type="Reactome" id="R-HSA-389977">
    <property type="pathway name" value="Post-chaperonin tubulin folding pathway"/>
</dbReference>
<dbReference type="Reactome" id="R-HSA-437239">
    <property type="pathway name" value="Recycling pathway of L1"/>
</dbReference>
<dbReference type="Reactome" id="R-HSA-5610787">
    <property type="pathway name" value="Hedgehog 'off' state"/>
</dbReference>
<dbReference type="Reactome" id="R-HSA-5617833">
    <property type="pathway name" value="Cilium Assembly"/>
</dbReference>
<dbReference type="Reactome" id="R-HSA-5620912">
    <property type="pathway name" value="Anchoring of the basal body to the plasma membrane"/>
</dbReference>
<dbReference type="Reactome" id="R-HSA-5620924">
    <property type="pathway name" value="Intraflagellar transport"/>
</dbReference>
<dbReference type="Reactome" id="R-HSA-5626467">
    <property type="pathway name" value="RHO GTPases activate IQGAPs"/>
</dbReference>
<dbReference type="Reactome" id="R-HSA-5663220">
    <property type="pathway name" value="RHO GTPases Activate Formins"/>
</dbReference>
<dbReference type="Reactome" id="R-HSA-6807878">
    <property type="pathway name" value="COPI-mediated anterograde transport"/>
</dbReference>
<dbReference type="Reactome" id="R-HSA-6811434">
    <property type="pathway name" value="COPI-dependent Golgi-to-ER retrograde traffic"/>
</dbReference>
<dbReference type="Reactome" id="R-HSA-6811436">
    <property type="pathway name" value="COPI-independent Golgi-to-ER retrograde traffic"/>
</dbReference>
<dbReference type="Reactome" id="R-HSA-68877">
    <property type="pathway name" value="Mitotic Prometaphase"/>
</dbReference>
<dbReference type="Reactome" id="R-HSA-8852276">
    <property type="pathway name" value="The role of GTSE1 in G2/M progression after G2 checkpoint"/>
</dbReference>
<dbReference type="Reactome" id="R-HSA-8854518">
    <property type="pathway name" value="AURKA Activation by TPX2"/>
</dbReference>
<dbReference type="Reactome" id="R-HSA-8955332">
    <property type="pathway name" value="Carboxyterminal post-translational modifications of tubulin"/>
</dbReference>
<dbReference type="Reactome" id="R-HSA-9609690">
    <property type="pathway name" value="HCMV Early Events"/>
</dbReference>
<dbReference type="Reactome" id="R-HSA-9609736">
    <property type="pathway name" value="Assembly and cell surface presentation of NMDA receptors"/>
</dbReference>
<dbReference type="Reactome" id="R-HSA-9619483">
    <property type="pathway name" value="Activation of AMPK downstream of NMDARs"/>
</dbReference>
<dbReference type="Reactome" id="R-HSA-9646399">
    <property type="pathway name" value="Aggrephagy"/>
</dbReference>
<dbReference type="Reactome" id="R-HSA-9648025">
    <property type="pathway name" value="EML4 and NUDC in mitotic spindle formation"/>
</dbReference>
<dbReference type="Reactome" id="R-HSA-9668328">
    <property type="pathway name" value="Sealing of the nuclear envelope (NE) by ESCRT-III"/>
</dbReference>
<dbReference type="Reactome" id="R-HSA-983189">
    <property type="pathway name" value="Kinesins"/>
</dbReference>
<dbReference type="Reactome" id="R-HSA-9833482">
    <property type="pathway name" value="PKR-mediated signaling"/>
</dbReference>
<dbReference type="SignaLink" id="P04350"/>
<dbReference type="SIGNOR" id="P04350"/>
<dbReference type="BioGRID-ORCS" id="10382">
    <property type="hits" value="29 hits in 1147 CRISPR screens"/>
</dbReference>
<dbReference type="CD-CODE" id="91857CE7">
    <property type="entry name" value="Nucleolus"/>
</dbReference>
<dbReference type="CD-CODE" id="FB4E32DD">
    <property type="entry name" value="Presynaptic clusters and postsynaptic densities"/>
</dbReference>
<dbReference type="ChiTaRS" id="TUBB4A">
    <property type="organism name" value="human"/>
</dbReference>
<dbReference type="GeneWiki" id="TUBB4"/>
<dbReference type="GenomeRNAi" id="10382"/>
<dbReference type="Pharos" id="P04350">
    <property type="development level" value="Tclin"/>
</dbReference>
<dbReference type="PRO" id="PR:P04350"/>
<dbReference type="Proteomes" id="UP000005640">
    <property type="component" value="Chromosome 19"/>
</dbReference>
<dbReference type="RNAct" id="P04350">
    <property type="molecule type" value="protein"/>
</dbReference>
<dbReference type="Bgee" id="ENSG00000104833">
    <property type="expression patterns" value="Expressed in right hemisphere of cerebellum and 131 other cell types or tissues"/>
</dbReference>
<dbReference type="ExpressionAtlas" id="P04350">
    <property type="expression patterns" value="baseline and differential"/>
</dbReference>
<dbReference type="GO" id="GO:0005930">
    <property type="term" value="C:axoneme"/>
    <property type="evidence" value="ECO:0000314"/>
    <property type="project" value="UniProtKB"/>
</dbReference>
<dbReference type="GO" id="GO:0005737">
    <property type="term" value="C:cytoplasm"/>
    <property type="evidence" value="ECO:0000318"/>
    <property type="project" value="GO_Central"/>
</dbReference>
<dbReference type="GO" id="GO:0005829">
    <property type="term" value="C:cytosol"/>
    <property type="evidence" value="ECO:0000304"/>
    <property type="project" value="Reactome"/>
</dbReference>
<dbReference type="GO" id="GO:0070062">
    <property type="term" value="C:extracellular exosome"/>
    <property type="evidence" value="ECO:0007005"/>
    <property type="project" value="UniProtKB"/>
</dbReference>
<dbReference type="GO" id="GO:0045171">
    <property type="term" value="C:intercellular bridge"/>
    <property type="evidence" value="ECO:0000314"/>
    <property type="project" value="HPA"/>
</dbReference>
<dbReference type="GO" id="GO:0033269">
    <property type="term" value="C:internode region of axon"/>
    <property type="evidence" value="ECO:0007669"/>
    <property type="project" value="Ensembl"/>
</dbReference>
<dbReference type="GO" id="GO:0005874">
    <property type="term" value="C:microtubule"/>
    <property type="evidence" value="ECO:0000314"/>
    <property type="project" value="UniProtKB"/>
</dbReference>
<dbReference type="GO" id="GO:0015630">
    <property type="term" value="C:microtubule cytoskeleton"/>
    <property type="evidence" value="ECO:0000314"/>
    <property type="project" value="HPA"/>
</dbReference>
<dbReference type="GO" id="GO:0072686">
    <property type="term" value="C:mitotic spindle"/>
    <property type="evidence" value="ECO:0000314"/>
    <property type="project" value="HPA"/>
</dbReference>
<dbReference type="GO" id="GO:0043209">
    <property type="term" value="C:myelin sheath"/>
    <property type="evidence" value="ECO:0007669"/>
    <property type="project" value="Ensembl"/>
</dbReference>
<dbReference type="GO" id="GO:0043025">
    <property type="term" value="C:neuronal cell body"/>
    <property type="evidence" value="ECO:0007669"/>
    <property type="project" value="Ensembl"/>
</dbReference>
<dbReference type="GO" id="GO:0005634">
    <property type="term" value="C:nucleus"/>
    <property type="evidence" value="ECO:0007005"/>
    <property type="project" value="UniProtKB"/>
</dbReference>
<dbReference type="GO" id="GO:0005509">
    <property type="term" value="F:calcium ion binding"/>
    <property type="evidence" value="ECO:0000315"/>
    <property type="project" value="CAFA"/>
</dbReference>
<dbReference type="GO" id="GO:0005525">
    <property type="term" value="F:GTP binding"/>
    <property type="evidence" value="ECO:0000318"/>
    <property type="project" value="GO_Central"/>
</dbReference>
<dbReference type="GO" id="GO:0003924">
    <property type="term" value="F:GTPase activity"/>
    <property type="evidence" value="ECO:0007669"/>
    <property type="project" value="InterPro"/>
</dbReference>
<dbReference type="GO" id="GO:0005200">
    <property type="term" value="F:structural constituent of cytoskeleton"/>
    <property type="evidence" value="ECO:0000318"/>
    <property type="project" value="GO_Central"/>
</dbReference>
<dbReference type="GO" id="GO:0000226">
    <property type="term" value="P:microtubule cytoskeleton organization"/>
    <property type="evidence" value="ECO:0000318"/>
    <property type="project" value="GO_Central"/>
</dbReference>
<dbReference type="GO" id="GO:0000278">
    <property type="term" value="P:mitotic cell cycle"/>
    <property type="evidence" value="ECO:0000318"/>
    <property type="project" value="GO_Central"/>
</dbReference>
<dbReference type="GO" id="GO:0031115">
    <property type="term" value="P:negative regulation of microtubule polymerization"/>
    <property type="evidence" value="ECO:0000315"/>
    <property type="project" value="CAFA"/>
</dbReference>
<dbReference type="CDD" id="cd02187">
    <property type="entry name" value="beta_tubulin"/>
    <property type="match status" value="1"/>
</dbReference>
<dbReference type="FunFam" id="1.10.287.600:FF:000002">
    <property type="entry name" value="Tubulin beta chain"/>
    <property type="match status" value="1"/>
</dbReference>
<dbReference type="FunFam" id="3.30.1330.20:FF:000002">
    <property type="entry name" value="Tubulin beta chain"/>
    <property type="match status" value="1"/>
</dbReference>
<dbReference type="FunFam" id="3.40.50.1440:FF:000003">
    <property type="entry name" value="Tubulin beta chain"/>
    <property type="match status" value="1"/>
</dbReference>
<dbReference type="Gene3D" id="1.10.287.600">
    <property type="entry name" value="Helix hairpin bin"/>
    <property type="match status" value="1"/>
</dbReference>
<dbReference type="Gene3D" id="3.30.1330.20">
    <property type="entry name" value="Tubulin/FtsZ, C-terminal domain"/>
    <property type="match status" value="1"/>
</dbReference>
<dbReference type="Gene3D" id="3.40.50.1440">
    <property type="entry name" value="Tubulin/FtsZ, GTPase domain"/>
    <property type="match status" value="1"/>
</dbReference>
<dbReference type="InterPro" id="IPR013838">
    <property type="entry name" value="Beta-tubulin_BS"/>
</dbReference>
<dbReference type="InterPro" id="IPR002453">
    <property type="entry name" value="Beta_tubulin"/>
</dbReference>
<dbReference type="InterPro" id="IPR008280">
    <property type="entry name" value="Tub_FtsZ_C"/>
</dbReference>
<dbReference type="InterPro" id="IPR000217">
    <property type="entry name" value="Tubulin"/>
</dbReference>
<dbReference type="InterPro" id="IPR037103">
    <property type="entry name" value="Tubulin/FtsZ-like_C"/>
</dbReference>
<dbReference type="InterPro" id="IPR018316">
    <property type="entry name" value="Tubulin/FtsZ_2-layer-sand-dom"/>
</dbReference>
<dbReference type="InterPro" id="IPR036525">
    <property type="entry name" value="Tubulin/FtsZ_GTPase_sf"/>
</dbReference>
<dbReference type="InterPro" id="IPR023123">
    <property type="entry name" value="Tubulin_C"/>
</dbReference>
<dbReference type="InterPro" id="IPR017975">
    <property type="entry name" value="Tubulin_CS"/>
</dbReference>
<dbReference type="InterPro" id="IPR003008">
    <property type="entry name" value="Tubulin_FtsZ_GTPase"/>
</dbReference>
<dbReference type="PANTHER" id="PTHR11588">
    <property type="entry name" value="TUBULIN"/>
    <property type="match status" value="1"/>
</dbReference>
<dbReference type="Pfam" id="PF00091">
    <property type="entry name" value="Tubulin"/>
    <property type="match status" value="1"/>
</dbReference>
<dbReference type="Pfam" id="PF03953">
    <property type="entry name" value="Tubulin_C"/>
    <property type="match status" value="1"/>
</dbReference>
<dbReference type="PRINTS" id="PR01163">
    <property type="entry name" value="BETATUBULIN"/>
</dbReference>
<dbReference type="PRINTS" id="PR01161">
    <property type="entry name" value="TUBULIN"/>
</dbReference>
<dbReference type="SMART" id="SM00864">
    <property type="entry name" value="Tubulin"/>
    <property type="match status" value="1"/>
</dbReference>
<dbReference type="SMART" id="SM00865">
    <property type="entry name" value="Tubulin_C"/>
    <property type="match status" value="1"/>
</dbReference>
<dbReference type="SUPFAM" id="SSF55307">
    <property type="entry name" value="Tubulin C-terminal domain-like"/>
    <property type="match status" value="1"/>
</dbReference>
<dbReference type="SUPFAM" id="SSF52490">
    <property type="entry name" value="Tubulin nucleotide-binding domain-like"/>
    <property type="match status" value="1"/>
</dbReference>
<dbReference type="PROSITE" id="PS00227">
    <property type="entry name" value="TUBULIN"/>
    <property type="match status" value="1"/>
</dbReference>
<dbReference type="PROSITE" id="PS00228">
    <property type="entry name" value="TUBULIN_B_AUTOREG"/>
    <property type="match status" value="1"/>
</dbReference>
<organism>
    <name type="scientific">Homo sapiens</name>
    <name type="common">Human</name>
    <dbReference type="NCBI Taxonomy" id="9606"/>
    <lineage>
        <taxon>Eukaryota</taxon>
        <taxon>Metazoa</taxon>
        <taxon>Chordata</taxon>
        <taxon>Craniata</taxon>
        <taxon>Vertebrata</taxon>
        <taxon>Euteleostomi</taxon>
        <taxon>Mammalia</taxon>
        <taxon>Eutheria</taxon>
        <taxon>Euarchontoglires</taxon>
        <taxon>Primates</taxon>
        <taxon>Haplorrhini</taxon>
        <taxon>Catarrhini</taxon>
        <taxon>Hominidae</taxon>
        <taxon>Homo</taxon>
    </lineage>
</organism>
<protein>
    <recommendedName>
        <fullName>Tubulin beta-4A chain</fullName>
    </recommendedName>
    <alternativeName>
        <fullName>Tubulin 5 beta</fullName>
    </alternativeName>
    <alternativeName>
        <fullName>Tubulin beta-4 chain</fullName>
    </alternativeName>
</protein>
<proteinExistence type="evidence at protein level"/>
<gene>
    <name type="primary">TUBB4A</name>
    <name type="synonym">TUBB4</name>
    <name type="synonym">TUBB5</name>
</gene>
<feature type="chain" id="PRO_0000048252" description="Tubulin beta-4A chain">
    <location>
        <begin position="1"/>
        <end position="444"/>
    </location>
</feature>
<feature type="short sequence motif" description="MREI motif" evidence="1">
    <location>
        <begin position="1"/>
        <end position="4"/>
    </location>
</feature>
<feature type="binding site" evidence="4">
    <location>
        <position position="11"/>
    </location>
    <ligand>
        <name>GTP</name>
        <dbReference type="ChEBI" id="CHEBI:37565"/>
    </ligand>
</feature>
<feature type="binding site" evidence="2">
    <location>
        <position position="69"/>
    </location>
    <ligand>
        <name>GTP</name>
        <dbReference type="ChEBI" id="CHEBI:37565"/>
    </ligand>
</feature>
<feature type="binding site" evidence="2">
    <location>
        <position position="69"/>
    </location>
    <ligand>
        <name>Mg(2+)</name>
        <dbReference type="ChEBI" id="CHEBI:18420"/>
    </ligand>
</feature>
<feature type="binding site" evidence="4">
    <location>
        <position position="138"/>
    </location>
    <ligand>
        <name>GTP</name>
        <dbReference type="ChEBI" id="CHEBI:37565"/>
    </ligand>
</feature>
<feature type="binding site" evidence="4">
    <location>
        <position position="142"/>
    </location>
    <ligand>
        <name>GTP</name>
        <dbReference type="ChEBI" id="CHEBI:37565"/>
    </ligand>
</feature>
<feature type="binding site" evidence="4">
    <location>
        <position position="143"/>
    </location>
    <ligand>
        <name>GTP</name>
        <dbReference type="ChEBI" id="CHEBI:37565"/>
    </ligand>
</feature>
<feature type="binding site" evidence="4">
    <location>
        <position position="144"/>
    </location>
    <ligand>
        <name>GTP</name>
        <dbReference type="ChEBI" id="CHEBI:37565"/>
    </ligand>
</feature>
<feature type="binding site" evidence="4">
    <location>
        <position position="204"/>
    </location>
    <ligand>
        <name>GTP</name>
        <dbReference type="ChEBI" id="CHEBI:37565"/>
    </ligand>
</feature>
<feature type="binding site" evidence="4">
    <location>
        <position position="226"/>
    </location>
    <ligand>
        <name>GTP</name>
        <dbReference type="ChEBI" id="CHEBI:37565"/>
    </ligand>
</feature>
<feature type="modified residue" description="Phosphoserine; by CDK1" evidence="6">
    <location>
        <position position="172"/>
    </location>
</feature>
<feature type="modified residue" description="5-glutamyl polyglutamate" evidence="5">
    <location>
        <position position="436"/>
    </location>
</feature>
<feature type="sequence variant" id="VAR_069798" description="In DYT4; dbSNP:rs587776983." evidence="8">
    <original>R</original>
    <variation>G</variation>
    <location>
        <position position="2"/>
    </location>
</feature>
<feature type="sequence variant" id="VAR_052673" description="In dbSNP:rs1053262." evidence="11">
    <original>I</original>
    <variation>M</variation>
    <location>
        <position position="155"/>
    </location>
</feature>
<feature type="sequence variant" id="VAR_069799" description="In HLD6; dbSNP:rs483352809." evidence="9">
    <original>D</original>
    <variation>N</variation>
    <location>
        <position position="249"/>
    </location>
</feature>
<feature type="sequence variant" id="VAR_026044" description="In dbSNP:rs1053267." evidence="11">
    <original>A</original>
    <variation>V</variation>
    <location>
        <position position="365"/>
    </location>
</feature>
<feature type="sequence conflict" description="In Ref. 1; CAA25318." evidence="12" ref="1">
    <original>G</original>
    <variation>A</variation>
    <location>
        <position position="269"/>
    </location>
</feature>
<feature type="sequence conflict" description="In Ref. 1; CAA25318." evidence="12" ref="1">
    <original>A</original>
    <variation>G</variation>
    <location>
        <position position="283"/>
    </location>
</feature>
<feature type="sequence conflict" description="In Ref. 1; CAA25318." evidence="12" ref="1">
    <original>E</original>
    <variation>Q</variation>
    <location>
        <position position="432"/>
    </location>
</feature>
<comment type="function">
    <text>Tubulin is the major constituent of microtubules, a cylinder consisting of laterally associated linear protofilaments composed of alpha- and beta-tubulin heterodimers. Microtubules grow by the addition of GTP-tubulin dimers to the microtubule end, where a stabilizing cap forms. Below the cap, tubulin dimers are in GDP-bound state, owing to GTPase activity of alpha-tubulin.</text>
</comment>
<comment type="cofactor">
    <cofactor evidence="2">
        <name>Mg(2+)</name>
        <dbReference type="ChEBI" id="CHEBI:18420"/>
    </cofactor>
</comment>
<comment type="subunit">
    <text>Dimer of alpha and beta chains. A typical microtubule is a hollow water-filled tube with an outer diameter of 25 nm and an inner diameter of 15 nM. Alpha-beta heterodimers associate head-to-tail to form protofilaments running lengthwise along the microtubule wall with the beta-tubulin subunit facing the microtubule plus end conferring a structural polarity. Microtubules usually have 13 protofilaments but different protofilament numbers can be found in some organisms and specialized cells.</text>
</comment>
<comment type="interaction">
    <interactant intactId="EBI-355007">
        <id>P04350</id>
    </interactant>
    <interactant intactId="EBI-5323863">
        <id>Q5S007</id>
        <label>LRRK2</label>
    </interactant>
    <organismsDiffer>false</organismsDiffer>
    <experiments>6</experiments>
</comment>
<comment type="interaction">
    <interactant intactId="EBI-355007">
        <id>P04350</id>
    </interactant>
    <interactant intactId="EBI-721550">
        <id>P22736</id>
        <label>NR4A1</label>
    </interactant>
    <organismsDiffer>false</organismsDiffer>
    <experiments>2</experiments>
</comment>
<comment type="subcellular location">
    <subcellularLocation>
        <location>Cytoplasm</location>
        <location>Cytoskeleton</location>
    </subcellularLocation>
</comment>
<comment type="tissue specificity">
    <text evidence="7 8">Major isotype in brain, where it represents 46% of all beta-tubulins. In the brain, highest expression levels in the cerebellum, followed by putamen and white matter. Moderate levels in testis. Very low levels, if any, in other tissues.</text>
</comment>
<comment type="domain">
    <text>The highly acidic C-terminal region may bind cations such as calcium.</text>
</comment>
<comment type="domain">
    <text evidence="1">The MREI motif is common among all beta-tubulin isoforms and may be critical for tubulin autoregulation.</text>
</comment>
<comment type="PTM">
    <text evidence="3 10">Some glutamate residues at the C-terminus are polyglutamylated, resulting in polyglutamate chains on the gamma-carboxyl group (PubMed:26875866). Polyglutamylation plays a key role in microtubule severing by spastin (SPAST). SPAST preferentially recognizes and acts on microtubules decorated with short polyglutamate tails: severing activity by SPAST increases as the number of glutamates per tubulin rises from one to eight, but decreases beyond this glutamylation threshold (PubMed:26875866). Glutamylation is also involved in cilia motility (By similarity).</text>
</comment>
<comment type="PTM">
    <text evidence="1 13">Some glutamate residues at the C-terminus are monoglycylated but not polyglycylated due to the absence of functional TTLL10 in human. Monoglycylation is mainly limited to tubulin incorporated into cilia and flagella axonemes, which is required for their stability and maintenance. Flagella glycylation controls sperm motility. Both polyglutamylation and monoglycylation can coexist on the same protein on adjacent residues, and lowering glycylation levels increases polyglutamylation, and reciprocally.</text>
</comment>
<comment type="PTM">
    <text evidence="6">Phosphorylated on Ser-172 by CDK1 during the cell cycle, from metaphase to telophase, but not in interphase. This phosphorylation inhibits tubulin incorporation into microtubules.</text>
</comment>
<comment type="disease" evidence="8">
    <disease id="DI-03777">
        <name>Dystonia 4, torsion, autosomal dominant</name>
        <acronym>DYT4</acronym>
        <description>A form of torsion dystonia, a disease defined by the presence of sustained involuntary muscle contractions, often leading to abnormal postures. 'Torsion' refers to the twisting nature of body movements, often affecting the trunk. DYT4 is characterized by onset in the second to third decade of progressive laryngeal dysphonia followed by the involvement of other muscles, such as the neck or limbs. Some patients develop an ataxic gait.</description>
        <dbReference type="MIM" id="128101"/>
    </disease>
    <text>The disease is caused by variants affecting the gene represented in this entry.</text>
</comment>
<comment type="disease" evidence="9">
    <disease id="DI-03778">
        <name>Leukodystrophy, hypomyelinating, 6</name>
        <acronym>HLD6</acronym>
        <description>A neurologic disorder characterized by onset in infancy or early childhood of delayed motor development and gait instability, followed by extrapyramidal movement disorders, such as dystonia, choreoathetosis, rigidity, opisthotonus, and oculogyric crises, progressive spastic tetraplegia, ataxia, and, more rarely, seizures. Most patients have cognitive decline and speech delay, but some can function normally. Brain MRI shows a combination of hypomyelination, cerebellar atrophy, and atrophy or disappearance of the putamen.</description>
        <dbReference type="MIM" id="612438"/>
    </disease>
    <text>The disease is caused by variants affecting the gene represented in this entry.</text>
</comment>
<comment type="similarity">
    <text evidence="12">Belongs to the tubulin family.</text>
</comment>
<accession>P04350</accession>
<accession>B3KQP4</accession>
<accession>Q969E5</accession>
<keyword id="KW-0963">Cytoplasm</keyword>
<keyword id="KW-0206">Cytoskeleton</keyword>
<keyword id="KW-0903">Direct protein sequencing</keyword>
<keyword id="KW-0225">Disease variant</keyword>
<keyword id="KW-1023">Dystonia</keyword>
<keyword id="KW-0342">GTP-binding</keyword>
<keyword id="KW-1017">Isopeptide bond</keyword>
<keyword id="KW-1026">Leukodystrophy</keyword>
<keyword id="KW-0460">Magnesium</keyword>
<keyword id="KW-0479">Metal-binding</keyword>
<keyword id="KW-0493">Microtubule</keyword>
<keyword id="KW-0547">Nucleotide-binding</keyword>
<keyword id="KW-0597">Phosphoprotein</keyword>
<keyword id="KW-1267">Proteomics identification</keyword>
<keyword id="KW-1185">Reference proteome</keyword>
<evidence type="ECO:0000250" key="1">
    <source>
        <dbReference type="UniProtKB" id="P07437"/>
    </source>
</evidence>
<evidence type="ECO:0000250" key="2">
    <source>
        <dbReference type="UniProtKB" id="P68363"/>
    </source>
</evidence>
<evidence type="ECO:0000250" key="3">
    <source>
        <dbReference type="UniProtKB" id="P99024"/>
    </source>
</evidence>
<evidence type="ECO:0000250" key="4">
    <source>
        <dbReference type="UniProtKB" id="Q13509"/>
    </source>
</evidence>
<evidence type="ECO:0000250" key="5">
    <source>
        <dbReference type="UniProtKB" id="Q2T9S0"/>
    </source>
</evidence>
<evidence type="ECO:0000269" key="6">
    <source>
    </source>
</evidence>
<evidence type="ECO:0000269" key="7">
    <source>
    </source>
</evidence>
<evidence type="ECO:0000269" key="8">
    <source>
    </source>
</evidence>
<evidence type="ECO:0000269" key="9">
    <source>
    </source>
</evidence>
<evidence type="ECO:0000269" key="10">
    <source>
    </source>
</evidence>
<evidence type="ECO:0000269" key="11">
    <source>
    </source>
</evidence>
<evidence type="ECO:0000305" key="12"/>
<evidence type="ECO:0000305" key="13">
    <source>
    </source>
</evidence>
<sequence>MREIVHLQAGQCGNQIGAKFWEVISDEHGIDPTGTYHGDSDLQLERINVYYNEATGGNYVPRAVLVDLEPGTMDSVRSGPFGQIFRPDNFVFGQSGAGNNWAKGHYTEGAELVDAVLDVVRKEAESCDCLQGFQLTHSLGGGTGSGMGTLLISKIREEFPDRIMNTFSVVPSPKVSDTVVEPYNATLSVHQLVENTDETYCIDNEALYDICFRTLKLTTPTYGDLNHLVSATMSGVTTCLRFPGQLNADLRKLAVNMVPFPRLHFFMPGFAPLTSRGSQQYRALTVPELTQQMFDAKNMMAACDPRHGRYLTVAAVFRGRMSMKEVDEQMLSVQSKNSSYFVEWIPNNVKTAVCDIPPRGLKMAATFIGNSTAIQELFKRISEQFTAMFRRKAFLHWYTGEGMDEMEFTEAESNMNDLVSEYQQYQDATAEEGEFEEEAEEEVA</sequence>
<reference key="1">
    <citation type="journal article" date="1984" name="Nucleic Acids Res.">
        <title>Sequence of an expressed human beta-tubulin gene containing ten Alu family members.</title>
        <authorList>
            <person name="Lee M.G.-S."/>
            <person name="Loomis C."/>
            <person name="Cowan N.J."/>
        </authorList>
    </citation>
    <scope>NUCLEOTIDE SEQUENCE [GENOMIC DNA]</scope>
    <scope>VARIANTS MET-155 AND VAL-365</scope>
</reference>
<reference key="2">
    <citation type="journal article" date="2005" name="DNA Res.">
        <title>Signal sequence and keyword trap in silico for selection of full-length human cDNAs encoding secretion or membrane proteins from oligo-capped cDNA libraries.</title>
        <authorList>
            <person name="Otsuki T."/>
            <person name="Ota T."/>
            <person name="Nishikawa T."/>
            <person name="Hayashi K."/>
            <person name="Suzuki Y."/>
            <person name="Yamamoto J."/>
            <person name="Wakamatsu A."/>
            <person name="Kimura K."/>
            <person name="Sakamoto K."/>
            <person name="Hatano N."/>
            <person name="Kawai Y."/>
            <person name="Ishii S."/>
            <person name="Saito K."/>
            <person name="Kojima S."/>
            <person name="Sugiyama T."/>
            <person name="Ono T."/>
            <person name="Okano K."/>
            <person name="Yoshikawa Y."/>
            <person name="Aotsuka S."/>
            <person name="Sasaki N."/>
            <person name="Hattori A."/>
            <person name="Okumura K."/>
            <person name="Nagai K."/>
            <person name="Sugano S."/>
            <person name="Isogai T."/>
        </authorList>
    </citation>
    <scope>NUCLEOTIDE SEQUENCE [LARGE SCALE MRNA]</scope>
</reference>
<reference key="3">
    <citation type="submission" date="2005-09" db="EMBL/GenBank/DDBJ databases">
        <authorList>
            <person name="Mural R.J."/>
            <person name="Istrail S."/>
            <person name="Sutton G.G."/>
            <person name="Florea L."/>
            <person name="Halpern A.L."/>
            <person name="Mobarry C.M."/>
            <person name="Lippert R."/>
            <person name="Walenz B."/>
            <person name="Shatkay H."/>
            <person name="Dew I."/>
            <person name="Miller J.R."/>
            <person name="Flanigan M.J."/>
            <person name="Edwards N.J."/>
            <person name="Bolanos R."/>
            <person name="Fasulo D."/>
            <person name="Halldorsson B.V."/>
            <person name="Hannenhalli S."/>
            <person name="Turner R."/>
            <person name="Yooseph S."/>
            <person name="Lu F."/>
            <person name="Nusskern D.R."/>
            <person name="Shue B.C."/>
            <person name="Zheng X.H."/>
            <person name="Zhong F."/>
            <person name="Delcher A.L."/>
            <person name="Huson D.H."/>
            <person name="Kravitz S.A."/>
            <person name="Mouchard L."/>
            <person name="Reinert K."/>
            <person name="Remington K.A."/>
            <person name="Clark A.G."/>
            <person name="Waterman M.S."/>
            <person name="Eichler E.E."/>
            <person name="Adams M.D."/>
            <person name="Hunkapiller M.W."/>
            <person name="Myers E.W."/>
            <person name="Venter J.C."/>
        </authorList>
    </citation>
    <scope>NUCLEOTIDE SEQUENCE [LARGE SCALE GENOMIC DNA]</scope>
</reference>
<reference key="4">
    <citation type="journal article" date="2004" name="Genome Res.">
        <title>The status, quality, and expansion of the NIH full-length cDNA project: the Mammalian Gene Collection (MGC).</title>
        <authorList>
            <consortium name="The MGC Project Team"/>
        </authorList>
    </citation>
    <scope>NUCLEOTIDE SEQUENCE [LARGE SCALE MRNA]</scope>
    <source>
        <tissue>Brain</tissue>
        <tissue>Uterus</tissue>
    </source>
</reference>
<reference key="5">
    <citation type="journal article" date="1996" name="Biochem. Biophys. Res. Commun.">
        <title>C-terminal fragments of alpha- and beta-tubulin form amyloid fibrils in vitro and associate with amyloid deposits of familial cerebral amyloid angiopathy, British type.</title>
        <authorList>
            <person name="Baumann M.H."/>
            <person name="Wisniewski T."/>
            <person name="Levy E."/>
            <person name="Plant G.T."/>
            <person name="Ghiso J."/>
        </authorList>
    </citation>
    <scope>PROTEIN SEQUENCE OF 283-289 AND 310-318</scope>
    <source>
        <tissue>Brain</tissue>
    </source>
</reference>
<reference key="6">
    <citation type="journal article" date="2003" name="Nature">
        <title>Proteomic characterization of the human centrosome by protein correlation profiling.</title>
        <authorList>
            <person name="Andersen J.S."/>
            <person name="Wilkinson C.J."/>
            <person name="Mayor T."/>
            <person name="Mortensen P."/>
            <person name="Nigg E.A."/>
            <person name="Mann M."/>
        </authorList>
    </citation>
    <scope>IDENTIFICATION BY MASS SPECTROMETRY</scope>
    <source>
        <tissue>Lymphoblast</tissue>
    </source>
</reference>
<reference key="7">
    <citation type="journal article" date="2006" name="Mol. Biol. Cell">
        <title>Microtubule regulation in mitosis: tubulin phosphorylation by the cyclin-dependent kinase Cdk1.</title>
        <authorList>
            <person name="Fourest-Lieuvin A."/>
            <person name="Peris L."/>
            <person name="Gache V."/>
            <person name="Garcia-Saez I."/>
            <person name="Juillan-Binard C."/>
            <person name="Lantez V."/>
            <person name="Job D."/>
        </authorList>
    </citation>
    <scope>PHOSPHORYLATION AT SER-172</scope>
</reference>
<reference key="8">
    <citation type="journal article" date="2009" name="Cell">
        <title>Evolutionary divergence of enzymatic mechanisms for posttranslational polyglycylation.</title>
        <authorList>
            <person name="Rogowski K."/>
            <person name="Juge F."/>
            <person name="van Dijk J."/>
            <person name="Wloga D."/>
            <person name="Strub J.-M."/>
            <person name="Levilliers N."/>
            <person name="Thomas D."/>
            <person name="Bre M.-H."/>
            <person name="Van Dorsselaer A."/>
            <person name="Gaertig J."/>
            <person name="Janke C."/>
        </authorList>
    </citation>
    <scope>GLYCYLATION</scope>
</reference>
<reference key="9">
    <citation type="journal article" date="2010" name="Cytoskeleton">
        <title>Tumoral and tissue-specific expression of the major human beta-tubulin isotypes.</title>
        <authorList>
            <person name="Leandro-Garcia L.J."/>
            <person name="Leskela S."/>
            <person name="Landa I."/>
            <person name="Montero-Conde C."/>
            <person name="Lopez-Jimenez E."/>
            <person name="Leton R."/>
            <person name="Cascon A."/>
            <person name="Robledo M."/>
            <person name="Rodriguez-Antona C."/>
        </authorList>
    </citation>
    <scope>TISSUE SPECIFICITY</scope>
</reference>
<reference key="10">
    <citation type="journal article" date="2011" name="BMC Syst. Biol.">
        <title>Initial characterization of the human central proteome.</title>
        <authorList>
            <person name="Burkard T.R."/>
            <person name="Planyavsky M."/>
            <person name="Kaupe I."/>
            <person name="Breitwieser F.P."/>
            <person name="Buerckstuemmer T."/>
            <person name="Bennett K.L."/>
            <person name="Superti-Furga G."/>
            <person name="Colinge J."/>
        </authorList>
    </citation>
    <scope>IDENTIFICATION BY MASS SPECTROMETRY [LARGE SCALE ANALYSIS]</scope>
</reference>
<reference key="11">
    <citation type="journal article" date="2016" name="Cell">
        <title>Graded control of microtubule severing by tubulin glutamylation.</title>
        <authorList>
            <person name="Valenstein M.L."/>
            <person name="Roll-Mecak A."/>
        </authorList>
    </citation>
    <scope>GLUTAMYLATION</scope>
</reference>
<reference key="12">
    <citation type="journal article" date="2013" name="Am. J. Hum. Genet.">
        <title>A de novo mutation in the beta-tubulin gene TUBB4A results in the leukoencephalopathy hypomyelination with atrophy of the basal ganglia and cerebellum.</title>
        <authorList>
            <person name="Simons C."/>
            <person name="Wolf N.I."/>
            <person name="McNeil N."/>
            <person name="Caldovic L."/>
            <person name="Devaney J.M."/>
            <person name="Takanohashi A."/>
            <person name="Crawford J."/>
            <person name="Ru K."/>
            <person name="Grimmond S.M."/>
            <person name="Miller D."/>
            <person name="Tonduti D."/>
            <person name="Schmidt J.L."/>
            <person name="Chudnow R.S."/>
            <person name="van Coster R."/>
            <person name="Lagae L."/>
            <person name="Kisler J."/>
            <person name="Sperner J."/>
            <person name="van der Knaap M.S."/>
            <person name="Schiffmann R."/>
            <person name="Taft R.J."/>
            <person name="Vanderver A."/>
        </authorList>
    </citation>
    <scope>VARIANT HLD6 ASN-249</scope>
</reference>
<reference key="13">
    <citation type="journal article" date="2013" name="Ann. Neurol.">
        <title>Mutations in the autoregulatory domain of beta-tubulin 4a cause hereditary dystonia.</title>
        <authorList>
            <person name="Hersheson J."/>
            <person name="Mencacci N.E."/>
            <person name="Davis M."/>
            <person name="Macdonald N."/>
            <person name="Trabzuni D."/>
            <person name="Ryten M."/>
            <person name="Pittman A."/>
            <person name="Paudel R."/>
            <person name="Kara E."/>
            <person name="Fawcett K."/>
            <person name="Plagnol V."/>
            <person name="Bhatia K.P."/>
            <person name="Medlar A.J."/>
            <person name="Stanescu H.C."/>
            <person name="Hardy J."/>
            <person name="Kleta R."/>
            <person name="Wood N.W."/>
            <person name="Houlden H."/>
        </authorList>
    </citation>
    <scope>VARIANT DYT4 GLY-2</scope>
    <scope>TISSUE SPECIFICITY</scope>
</reference>